<name>THYX_AQUAE</name>
<keyword id="KW-0274">FAD</keyword>
<keyword id="KW-0285">Flavoprotein</keyword>
<keyword id="KW-0489">Methyltransferase</keyword>
<keyword id="KW-0521">NADP</keyword>
<keyword id="KW-0545">Nucleotide biosynthesis</keyword>
<keyword id="KW-1185">Reference proteome</keyword>
<keyword id="KW-0808">Transferase</keyword>
<reference key="1">
    <citation type="journal article" date="1998" name="Nature">
        <title>The complete genome of the hyperthermophilic bacterium Aquifex aeolicus.</title>
        <authorList>
            <person name="Deckert G."/>
            <person name="Warren P.V."/>
            <person name="Gaasterland T."/>
            <person name="Young W.G."/>
            <person name="Lenox A.L."/>
            <person name="Graham D.E."/>
            <person name="Overbeek R."/>
            <person name="Snead M.A."/>
            <person name="Keller M."/>
            <person name="Aujay M."/>
            <person name="Huber R."/>
            <person name="Feldman R.A."/>
            <person name="Short J.M."/>
            <person name="Olsen G.J."/>
            <person name="Swanson R.V."/>
        </authorList>
    </citation>
    <scope>NUCLEOTIDE SEQUENCE [LARGE SCALE GENOMIC DNA]</scope>
    <source>
        <strain>VF5</strain>
    </source>
</reference>
<comment type="function">
    <text evidence="1">Catalyzes the reductive methylation of 2'-deoxyuridine-5'-monophosphate (dUMP) to 2'-deoxythymidine-5'-monophosphate (dTMP) while utilizing 5,10-methylenetetrahydrofolate (mTHF) as the methyl donor, and NADPH and FADH(2) as the reductant.</text>
</comment>
<comment type="catalytic activity">
    <reaction evidence="1">
        <text>dUMP + (6R)-5,10-methylene-5,6,7,8-tetrahydrofolate + NADPH + H(+) = dTMP + (6S)-5,6,7,8-tetrahydrofolate + NADP(+)</text>
        <dbReference type="Rhea" id="RHEA:29043"/>
        <dbReference type="ChEBI" id="CHEBI:15378"/>
        <dbReference type="ChEBI" id="CHEBI:15636"/>
        <dbReference type="ChEBI" id="CHEBI:57453"/>
        <dbReference type="ChEBI" id="CHEBI:57783"/>
        <dbReference type="ChEBI" id="CHEBI:58349"/>
        <dbReference type="ChEBI" id="CHEBI:63528"/>
        <dbReference type="ChEBI" id="CHEBI:246422"/>
        <dbReference type="EC" id="2.1.1.148"/>
    </reaction>
</comment>
<comment type="cofactor">
    <cofactor evidence="1">
        <name>FAD</name>
        <dbReference type="ChEBI" id="CHEBI:57692"/>
    </cofactor>
    <text evidence="1">Binds 4 FAD per tetramer. Each FAD binding site is formed by three monomers.</text>
</comment>
<comment type="pathway">
    <text evidence="1">Pyrimidine metabolism; dTTP biosynthesis.</text>
</comment>
<comment type="subunit">
    <text evidence="1">Homotetramer.</text>
</comment>
<comment type="similarity">
    <text evidence="3">Belongs to the thymidylate synthase ThyX family.</text>
</comment>
<protein>
    <recommendedName>
        <fullName evidence="1">Flavin-dependent thymidylate synthase</fullName>
        <shortName evidence="1">FDTS</shortName>
        <ecNumber evidence="1">2.1.1.148</ecNumber>
    </recommendedName>
    <alternativeName>
        <fullName evidence="1">FAD-dependent thymidylate synthase</fullName>
    </alternativeName>
    <alternativeName>
        <fullName evidence="1">Thymidylate synthase ThyX</fullName>
        <shortName evidence="1">TS</shortName>
        <shortName evidence="1">TSase</shortName>
    </alternativeName>
</protein>
<sequence length="317" mass="37642">MMKIYLMGSDQRIVRCARVSFAKDSYVDEKRDKRLIRYLFKHRHASPFEHNIIAFEWKKEKWIELLSKLENPTVQVYYSNGFVFLNLRNAINVWELLPDAVKERIKEAFPTTYGVIQRRGEIEDEELYSLPYTKDKAYVKEKIETSSGWIGLVDKLELETDMDFYTFVVECPLFVARQWMRHRFGSYNEVSKRYVGKEFLEFYLPKYIRKQAEKNKQASVDEPISESEVFIKKIENLISKSVKLYEEIIEKGGAKELARGVLPQFMKTRFYWTVPRISLDNFITLRTHEGAQKEIREFAEAIKEMVGYRGTDKKNVI</sequence>
<evidence type="ECO:0000250" key="1">
    <source>
        <dbReference type="UniProtKB" id="Q9WYT0"/>
    </source>
</evidence>
<evidence type="ECO:0000255" key="2">
    <source>
        <dbReference type="PROSITE-ProRule" id="PRU00661"/>
    </source>
</evidence>
<evidence type="ECO:0000305" key="3"/>
<feature type="chain" id="PRO_0000175552" description="Flavin-dependent thymidylate synthase">
    <location>
        <begin position="1"/>
        <end position="317"/>
    </location>
</feature>
<feature type="domain" description="ThyX" evidence="2">
    <location>
        <begin position="100"/>
        <end position="317"/>
    </location>
</feature>
<feature type="region of interest" description="Insert">
    <location>
        <begin position="55"/>
        <end position="166"/>
    </location>
</feature>
<feature type="short sequence motif" description="ThyX motif" evidence="2">
    <location>
        <begin position="181"/>
        <end position="191"/>
    </location>
</feature>
<feature type="active site" description="Involved in ionization of N3 of dUMP, leading to its activation" evidence="1">
    <location>
        <position position="286"/>
    </location>
</feature>
<feature type="binding site" evidence="1">
    <location>
        <position position="46"/>
    </location>
    <ligand>
        <name>FAD</name>
        <dbReference type="ChEBI" id="CHEBI:57692"/>
        <note>ligand shared between neighboring subunits</note>
    </ligand>
</feature>
<feature type="binding site" evidence="1">
    <location>
        <begin position="178"/>
        <end position="181"/>
    </location>
    <ligand>
        <name>dUMP</name>
        <dbReference type="ChEBI" id="CHEBI:246422"/>
        <note>ligand shared between dimeric partners</note>
    </ligand>
</feature>
<feature type="binding site" evidence="1">
    <location>
        <begin position="181"/>
        <end position="183"/>
    </location>
    <ligand>
        <name>FAD</name>
        <dbReference type="ChEBI" id="CHEBI:57692"/>
        <note>ligand shared between neighboring subunits</note>
    </ligand>
</feature>
<feature type="binding site" description="in other chain" evidence="1">
    <location>
        <begin position="189"/>
        <end position="193"/>
    </location>
    <ligand>
        <name>dUMP</name>
        <dbReference type="ChEBI" id="CHEBI:246422"/>
        <note>ligand shared between dimeric partners</note>
    </ligand>
</feature>
<feature type="binding site" evidence="1">
    <location>
        <position position="189"/>
    </location>
    <ligand>
        <name>FAD</name>
        <dbReference type="ChEBI" id="CHEBI:57692"/>
        <note>ligand shared between neighboring subunits</note>
    </ligand>
</feature>
<feature type="binding site" description="in other chain" evidence="1">
    <location>
        <position position="259"/>
    </location>
    <ligand>
        <name>dUMP</name>
        <dbReference type="ChEBI" id="CHEBI:246422"/>
        <note>ligand shared between dimeric partners</note>
    </ligand>
</feature>
<feature type="binding site" evidence="1">
    <location>
        <position position="281"/>
    </location>
    <ligand>
        <name>FAD</name>
        <dbReference type="ChEBI" id="CHEBI:57692"/>
        <note>ligand shared between neighboring subunits</note>
    </ligand>
</feature>
<feature type="binding site" evidence="1">
    <location>
        <position position="286"/>
    </location>
    <ligand>
        <name>dUMP</name>
        <dbReference type="ChEBI" id="CHEBI:246422"/>
        <note>ligand shared between dimeric partners</note>
    </ligand>
</feature>
<gene>
    <name evidence="1" type="primary">thyX</name>
    <name type="ordered locus">aq_640</name>
</gene>
<dbReference type="EC" id="2.1.1.148" evidence="1"/>
<dbReference type="EMBL" id="AE000657">
    <property type="protein sequence ID" value="AAC06847.1"/>
    <property type="molecule type" value="Genomic_DNA"/>
</dbReference>
<dbReference type="PIR" id="G70356">
    <property type="entry name" value="G70356"/>
</dbReference>
<dbReference type="RefSeq" id="NP_213443.1">
    <property type="nucleotide sequence ID" value="NC_000918.1"/>
</dbReference>
<dbReference type="SMR" id="O66883"/>
<dbReference type="STRING" id="224324.aq_640"/>
<dbReference type="EnsemblBacteria" id="AAC06847">
    <property type="protein sequence ID" value="AAC06847"/>
    <property type="gene ID" value="aq_640"/>
</dbReference>
<dbReference type="KEGG" id="aae:aq_640"/>
<dbReference type="PATRIC" id="fig|224324.8.peg.522"/>
<dbReference type="eggNOG" id="COG1351">
    <property type="taxonomic scope" value="Bacteria"/>
</dbReference>
<dbReference type="HOGENOM" id="CLU_828483_0_0_0"/>
<dbReference type="InParanoid" id="O66883"/>
<dbReference type="OrthoDB" id="9780625at2"/>
<dbReference type="UniPathway" id="UPA00575"/>
<dbReference type="Proteomes" id="UP000000798">
    <property type="component" value="Chromosome"/>
</dbReference>
<dbReference type="GO" id="GO:0050660">
    <property type="term" value="F:flavin adenine dinucleotide binding"/>
    <property type="evidence" value="ECO:0000318"/>
    <property type="project" value="GO_Central"/>
</dbReference>
<dbReference type="GO" id="GO:0070402">
    <property type="term" value="F:NADPH binding"/>
    <property type="evidence" value="ECO:0000318"/>
    <property type="project" value="GO_Central"/>
</dbReference>
<dbReference type="GO" id="GO:0050797">
    <property type="term" value="F:thymidylate synthase (FAD) activity"/>
    <property type="evidence" value="ECO:0000318"/>
    <property type="project" value="GO_Central"/>
</dbReference>
<dbReference type="GO" id="GO:0004799">
    <property type="term" value="F:thymidylate synthase activity"/>
    <property type="evidence" value="ECO:0000318"/>
    <property type="project" value="GO_Central"/>
</dbReference>
<dbReference type="GO" id="GO:0006231">
    <property type="term" value="P:dTMP biosynthetic process"/>
    <property type="evidence" value="ECO:0000318"/>
    <property type="project" value="GO_Central"/>
</dbReference>
<dbReference type="GO" id="GO:0006235">
    <property type="term" value="P:dTTP biosynthetic process"/>
    <property type="evidence" value="ECO:0007669"/>
    <property type="project" value="UniProtKB-UniPathway"/>
</dbReference>
<dbReference type="GO" id="GO:0032259">
    <property type="term" value="P:methylation"/>
    <property type="evidence" value="ECO:0007669"/>
    <property type="project" value="UniProtKB-KW"/>
</dbReference>
<dbReference type="CDD" id="cd20175">
    <property type="entry name" value="ThyX"/>
    <property type="match status" value="1"/>
</dbReference>
<dbReference type="Gene3D" id="3.30.1360.170">
    <property type="match status" value="2"/>
</dbReference>
<dbReference type="InterPro" id="IPR003669">
    <property type="entry name" value="Thymidylate_synthase_ThyX"/>
</dbReference>
<dbReference type="InterPro" id="IPR036098">
    <property type="entry name" value="Thymidylate_synthase_ThyX_sf"/>
</dbReference>
<dbReference type="NCBIfam" id="TIGR02170">
    <property type="entry name" value="thyX"/>
    <property type="match status" value="1"/>
</dbReference>
<dbReference type="PANTHER" id="PTHR34934">
    <property type="entry name" value="FLAVIN-DEPENDENT THYMIDYLATE SYNTHASE"/>
    <property type="match status" value="1"/>
</dbReference>
<dbReference type="PANTHER" id="PTHR34934:SF1">
    <property type="entry name" value="FLAVIN-DEPENDENT THYMIDYLATE SYNTHASE"/>
    <property type="match status" value="1"/>
</dbReference>
<dbReference type="Pfam" id="PF02511">
    <property type="entry name" value="Thy1"/>
    <property type="match status" value="2"/>
</dbReference>
<dbReference type="SUPFAM" id="SSF69796">
    <property type="entry name" value="Thymidylate synthase-complementing protein Thy1"/>
    <property type="match status" value="1"/>
</dbReference>
<dbReference type="PROSITE" id="PS51331">
    <property type="entry name" value="THYX"/>
    <property type="match status" value="1"/>
</dbReference>
<organism>
    <name type="scientific">Aquifex aeolicus (strain VF5)</name>
    <dbReference type="NCBI Taxonomy" id="224324"/>
    <lineage>
        <taxon>Bacteria</taxon>
        <taxon>Pseudomonadati</taxon>
        <taxon>Aquificota</taxon>
        <taxon>Aquificia</taxon>
        <taxon>Aquificales</taxon>
        <taxon>Aquificaceae</taxon>
        <taxon>Aquifex</taxon>
    </lineage>
</organism>
<proteinExistence type="inferred from homology"/>
<accession>O66883</accession>